<proteinExistence type="evidence at protein level"/>
<sequence length="364" mass="38398">MTDVTGAPADVLHTLFHSDQGGHEQVVLCQDRASGLKAVIALHSTALGPALGGTRFYPYANEAEAVADALNLARGMSYKNAMAGLEHGGGKAVIIGDPEQIKSEELLLAYGRFVASLGGRYVTACDVGTYVADMDVVARECRWTTGRSPENGGAGDSSVLTSFGVYQGMRAAAQHLWGDPTLRDRTVGIAGVGKVGHHLVEHLLAEGAHVVVTDVRKDVVRSLTERHPSVVAVADTDALIRVENLDIYAPCALGGALNDETVPVLTAKVVCGAANNQLAHPGVEKDLADRGILYAPDYVVNAGGVIQVADELHGFDFDRCKAKAAKIYDTTLAIFARAKEDGIPPAAAADRIAEQRMAEARARR</sequence>
<dbReference type="EC" id="1.4.1.23" evidence="4"/>
<dbReference type="EMBL" id="AF061195">
    <property type="protein sequence ID" value="AAC16007.1"/>
    <property type="molecule type" value="Genomic_DNA"/>
</dbReference>
<dbReference type="SMR" id="O69056"/>
<dbReference type="STRING" id="1888.Salbus254_3051"/>
<dbReference type="SABIO-RK" id="O69056"/>
<dbReference type="UniPathway" id="UPA00362"/>
<dbReference type="GO" id="GO:0005737">
    <property type="term" value="C:cytoplasm"/>
    <property type="evidence" value="ECO:0007669"/>
    <property type="project" value="UniProtKB-SubCell"/>
</dbReference>
<dbReference type="GO" id="GO:0043837">
    <property type="term" value="F:valine dehydrogenase (NAD+) activity"/>
    <property type="evidence" value="ECO:0007669"/>
    <property type="project" value="UniProtKB-EC"/>
</dbReference>
<dbReference type="GO" id="GO:0006574">
    <property type="term" value="P:valine catabolic process"/>
    <property type="evidence" value="ECO:0007669"/>
    <property type="project" value="UniProtKB-UniPathway"/>
</dbReference>
<dbReference type="CDD" id="cd01075">
    <property type="entry name" value="NAD_bind_Leu_Phe_Val_DH"/>
    <property type="match status" value="1"/>
</dbReference>
<dbReference type="FunFam" id="3.40.50.10860:FF:000010">
    <property type="entry name" value="Leucine dehydrogenase"/>
    <property type="match status" value="1"/>
</dbReference>
<dbReference type="Gene3D" id="3.40.50.10860">
    <property type="entry name" value="Leucine Dehydrogenase, chain A, domain 1"/>
    <property type="match status" value="1"/>
</dbReference>
<dbReference type="Gene3D" id="3.40.50.720">
    <property type="entry name" value="NAD(P)-binding Rossmann-like Domain"/>
    <property type="match status" value="1"/>
</dbReference>
<dbReference type="InterPro" id="IPR046346">
    <property type="entry name" value="Aminoacid_DH-like_N_sf"/>
</dbReference>
<dbReference type="InterPro" id="IPR006095">
    <property type="entry name" value="Glu/Leu/Phe/Val/Trp_DH"/>
</dbReference>
<dbReference type="InterPro" id="IPR006096">
    <property type="entry name" value="Glu/Leu/Phe/Val/Trp_DH_C"/>
</dbReference>
<dbReference type="InterPro" id="IPR006097">
    <property type="entry name" value="Glu/Leu/Phe/Val/Trp_DH_dimer"/>
</dbReference>
<dbReference type="InterPro" id="IPR033524">
    <property type="entry name" value="Glu/Leu/Phe/Val_DH_AS"/>
</dbReference>
<dbReference type="InterPro" id="IPR016211">
    <property type="entry name" value="Glu/Phe/Leu/Val/Trp_DH_bac/arc"/>
</dbReference>
<dbReference type="InterPro" id="IPR036291">
    <property type="entry name" value="NAD(P)-bd_dom_sf"/>
</dbReference>
<dbReference type="PANTHER" id="PTHR42722">
    <property type="entry name" value="LEUCINE DEHYDROGENASE"/>
    <property type="match status" value="1"/>
</dbReference>
<dbReference type="PANTHER" id="PTHR42722:SF1">
    <property type="entry name" value="VALINE DEHYDROGENASE"/>
    <property type="match status" value="1"/>
</dbReference>
<dbReference type="Pfam" id="PF00208">
    <property type="entry name" value="ELFV_dehydrog"/>
    <property type="match status" value="1"/>
</dbReference>
<dbReference type="Pfam" id="PF02812">
    <property type="entry name" value="ELFV_dehydrog_N"/>
    <property type="match status" value="1"/>
</dbReference>
<dbReference type="PIRSF" id="PIRSF000188">
    <property type="entry name" value="Phe_leu_dh"/>
    <property type="match status" value="1"/>
</dbReference>
<dbReference type="PRINTS" id="PR00082">
    <property type="entry name" value="GLFDHDRGNASE"/>
</dbReference>
<dbReference type="SMART" id="SM00839">
    <property type="entry name" value="ELFV_dehydrog"/>
    <property type="match status" value="1"/>
</dbReference>
<dbReference type="SUPFAM" id="SSF53223">
    <property type="entry name" value="Aminoacid dehydrogenase-like, N-terminal domain"/>
    <property type="match status" value="1"/>
</dbReference>
<dbReference type="SUPFAM" id="SSF51735">
    <property type="entry name" value="NAD(P)-binding Rossmann-fold domains"/>
    <property type="match status" value="1"/>
</dbReference>
<dbReference type="PROSITE" id="PS00074">
    <property type="entry name" value="GLFV_DEHYDROGENASE"/>
    <property type="match status" value="1"/>
</dbReference>
<evidence type="ECO:0000250" key="1"/>
<evidence type="ECO:0000250" key="2">
    <source>
        <dbReference type="UniProtKB" id="Q06539"/>
    </source>
</evidence>
<evidence type="ECO:0000255" key="3"/>
<evidence type="ECO:0000269" key="4">
    <source>
    </source>
</evidence>
<evidence type="ECO:0000269" key="5">
    <source>
    </source>
</evidence>
<evidence type="ECO:0000303" key="6">
    <source>
    </source>
</evidence>
<evidence type="ECO:0000305" key="7"/>
<protein>
    <recommendedName>
        <fullName evidence="6">Valine dehydrogenase</fullName>
        <shortName>ValDH</shortName>
        <ecNumber evidence="4">1.4.1.23</ecNumber>
    </recommendedName>
</protein>
<comment type="function">
    <text evidence="4">Oxidative deamination of branched-chain amino acids. Oxidizes L-valine and L-alpha-aminobutyric acid efficiently, and L-alanine and L-isoleucine less efficiently. D-valine and L-glutamate were not substrates for the enzyme. The catabolism of valine is the major source of fatty acid precursors for macrolide biosynthesis and a vital source of antibiotic precursors.</text>
</comment>
<comment type="catalytic activity">
    <reaction evidence="4">
        <text>L-valine + NAD(+) + H2O = 3-methyl-2-oxobutanoate + NH4(+) + NADH + H(+)</text>
        <dbReference type="Rhea" id="RHEA:30763"/>
        <dbReference type="ChEBI" id="CHEBI:11851"/>
        <dbReference type="ChEBI" id="CHEBI:15377"/>
        <dbReference type="ChEBI" id="CHEBI:15378"/>
        <dbReference type="ChEBI" id="CHEBI:28938"/>
        <dbReference type="ChEBI" id="CHEBI:57540"/>
        <dbReference type="ChEBI" id="CHEBI:57762"/>
        <dbReference type="ChEBI" id="CHEBI:57945"/>
        <dbReference type="EC" id="1.4.1.23"/>
    </reaction>
</comment>
<comment type="activity regulation">
    <text evidence="4">Inhibited by pyridoxal 5'-phosphate (PLP).</text>
</comment>
<comment type="biophysicochemical properties">
    <kinetics>
        <KM evidence="4">1.5 mM for L-valine</KM>
        <KM evidence="4">0.133 mM for NAD(+)</KM>
        <KM evidence="4">0.438 mM for 3-methyl-2-oxobutanoate</KM>
        <KM evidence="4">0.0576 mM for NADH</KM>
        <text evidence="4">kcat is 47.5 sec(-1) for the oxidative deamination of L-valine. kcat is 314.5 sec(-1) for the reductive amination of 3-methyl-2-oxobutanoate.</text>
    </kinetics>
</comment>
<comment type="pathway">
    <text evidence="4">Amino-acid degradation; L-valine degradation.</text>
</comment>
<comment type="subunit">
    <text evidence="2">Homodimer.</text>
</comment>
<comment type="subcellular location">
    <subcellularLocation>
        <location evidence="1">Cytoplasm</location>
    </subcellularLocation>
</comment>
<comment type="similarity">
    <text evidence="7">Belongs to the Glu/Leu/Phe/Val dehydrogenases family.</text>
</comment>
<keyword id="KW-0101">Branched-chain amino acid catabolism</keyword>
<keyword id="KW-0963">Cytoplasm</keyword>
<keyword id="KW-0520">NAD</keyword>
<keyword id="KW-0560">Oxidoreductase</keyword>
<reference key="1">
    <citation type="journal article" date="2000" name="FEMS Microbiol. Lett.">
        <title>Valine dehydrogenase from Streptomyces albus: gene cloning, heterologous expression and identification of active site by site-directed mutagenesis.</title>
        <authorList>
            <person name="Hyun C.-G."/>
            <person name="Kim S.S."/>
            <person name="Park K.-H."/>
            <person name="Suh J.-W."/>
        </authorList>
    </citation>
    <scope>NUCLEOTIDE SEQUENCE [GENOMIC DNA]</scope>
    <scope>FUNCTION</scope>
    <scope>CATALYTIC ACTIVITY</scope>
    <scope>SUBSTRATE SPECIFICITY</scope>
    <scope>BIOPHYSICOCHEMICAL PROPERTIES</scope>
    <scope>ACTIVITY REGULATION</scope>
    <scope>MUTAGENESIS OF LYS-79 AND LYS-91</scope>
    <source>
        <strain>ATCC 21838 / DSM 41398 / FERM P-419 / JCM 4703 / NBRC 107858</strain>
    </source>
</reference>
<reference key="2">
    <citation type="journal article" date="2000" name="Antonie Van Leeuwenhoek">
        <title>Alteration of substrate specificity of valine dehydrogenase from Streptomyces albus.</title>
        <authorList>
            <person name="Hyun C.-G."/>
            <person name="Kim S.S."/>
            <person name="Lee I.H."/>
            <person name="Suh J.-W."/>
        </authorList>
    </citation>
    <scope>MUTAGENESIS OF ALA-124</scope>
    <source>
        <strain>ATCC 21838 / DSM 41398 / FERM P-419 / JCM 4703 / NBRC 107858</strain>
    </source>
</reference>
<organism>
    <name type="scientific">Streptomyces albus (strain ATCC 21838 / DSM 41398 / FERM P-419 / JCM 4703 / NBRC 107858)</name>
    <dbReference type="NCBI Taxonomy" id="1081613"/>
    <lineage>
        <taxon>Bacteria</taxon>
        <taxon>Bacillati</taxon>
        <taxon>Actinomycetota</taxon>
        <taxon>Actinomycetes</taxon>
        <taxon>Kitasatosporales</taxon>
        <taxon>Streptomycetaceae</taxon>
        <taxon>Streptomyces</taxon>
    </lineage>
</organism>
<feature type="initiator methionine" description="Removed" evidence="1">
    <location>
        <position position="1"/>
    </location>
</feature>
<feature type="chain" id="PRO_0000182810" description="Valine dehydrogenase">
    <location>
        <begin position="2"/>
        <end position="364"/>
    </location>
</feature>
<feature type="active site" evidence="7">
    <location>
        <position position="91"/>
    </location>
</feature>
<feature type="binding site" evidence="3">
    <location>
        <begin position="191"/>
        <end position="197"/>
    </location>
    <ligand>
        <name>NAD(+)</name>
        <dbReference type="ChEBI" id="CHEBI:57540"/>
    </ligand>
</feature>
<feature type="mutagenesis site" description="Loss of activity." evidence="4">
    <original>K</original>
    <variation>A</variation>
    <location>
        <position position="79"/>
    </location>
</feature>
<feature type="mutagenesis site" description="Loss of activity." evidence="4">
    <original>K</original>
    <variation>A</variation>
    <location>
        <position position="91"/>
    </location>
</feature>
<feature type="mutagenesis site" description="Displays lower activities toward aliphatic amino acids, but higher activities toward L-phenylalanine, L-tyrosine and L-methionine." evidence="5">
    <original>A</original>
    <variation>G</variation>
    <location>
        <position position="124"/>
    </location>
</feature>
<gene>
    <name evidence="6" type="primary">vdh</name>
</gene>
<name>VDH_STRA4</name>
<accession>O69056</accession>